<reference key="1">
    <citation type="journal article" date="2005" name="Nucleic Acids Res.">
        <title>The genome sequence of Salmonella enterica serovar Choleraesuis, a highly invasive and resistant zoonotic pathogen.</title>
        <authorList>
            <person name="Chiu C.-H."/>
            <person name="Tang P."/>
            <person name="Chu C."/>
            <person name="Hu S."/>
            <person name="Bao Q."/>
            <person name="Yu J."/>
            <person name="Chou Y.-Y."/>
            <person name="Wang H.-S."/>
            <person name="Lee Y.-S."/>
        </authorList>
    </citation>
    <scope>NUCLEOTIDE SEQUENCE [LARGE SCALE GENOMIC DNA]</scope>
    <source>
        <strain>SC-B67</strain>
    </source>
</reference>
<evidence type="ECO:0000255" key="1">
    <source>
        <dbReference type="HAMAP-Rule" id="MF_00184"/>
    </source>
</evidence>
<evidence type="ECO:0000255" key="2">
    <source>
        <dbReference type="PROSITE-ProRule" id="PRU01228"/>
    </source>
</evidence>
<gene>
    <name evidence="1" type="primary">thrS</name>
    <name type="ordered locus">SCH_1352</name>
</gene>
<keyword id="KW-0030">Aminoacyl-tRNA synthetase</keyword>
<keyword id="KW-0067">ATP-binding</keyword>
<keyword id="KW-0963">Cytoplasm</keyword>
<keyword id="KW-0436">Ligase</keyword>
<keyword id="KW-0479">Metal-binding</keyword>
<keyword id="KW-0547">Nucleotide-binding</keyword>
<keyword id="KW-0648">Protein biosynthesis</keyword>
<keyword id="KW-0694">RNA-binding</keyword>
<keyword id="KW-0820">tRNA-binding</keyword>
<keyword id="KW-0862">Zinc</keyword>
<proteinExistence type="inferred from homology"/>
<name>SYT_SALCH</name>
<dbReference type="EC" id="6.1.1.3" evidence="1"/>
<dbReference type="EMBL" id="AE017220">
    <property type="protein sequence ID" value="AAX65258.1"/>
    <property type="molecule type" value="Genomic_DNA"/>
</dbReference>
<dbReference type="RefSeq" id="WP_001144215.1">
    <property type="nucleotide sequence ID" value="NC_006905.1"/>
</dbReference>
<dbReference type="SMR" id="Q57PV3"/>
<dbReference type="KEGG" id="sec:SCH_1352"/>
<dbReference type="HOGENOM" id="CLU_008554_0_1_6"/>
<dbReference type="Proteomes" id="UP000000538">
    <property type="component" value="Chromosome"/>
</dbReference>
<dbReference type="GO" id="GO:0005829">
    <property type="term" value="C:cytosol"/>
    <property type="evidence" value="ECO:0007669"/>
    <property type="project" value="TreeGrafter"/>
</dbReference>
<dbReference type="GO" id="GO:0005524">
    <property type="term" value="F:ATP binding"/>
    <property type="evidence" value="ECO:0007669"/>
    <property type="project" value="UniProtKB-UniRule"/>
</dbReference>
<dbReference type="GO" id="GO:0046872">
    <property type="term" value="F:metal ion binding"/>
    <property type="evidence" value="ECO:0007669"/>
    <property type="project" value="UniProtKB-KW"/>
</dbReference>
<dbReference type="GO" id="GO:0004829">
    <property type="term" value="F:threonine-tRNA ligase activity"/>
    <property type="evidence" value="ECO:0007669"/>
    <property type="project" value="UniProtKB-UniRule"/>
</dbReference>
<dbReference type="GO" id="GO:0000049">
    <property type="term" value="F:tRNA binding"/>
    <property type="evidence" value="ECO:0007669"/>
    <property type="project" value="UniProtKB-KW"/>
</dbReference>
<dbReference type="GO" id="GO:0006435">
    <property type="term" value="P:threonyl-tRNA aminoacylation"/>
    <property type="evidence" value="ECO:0007669"/>
    <property type="project" value="UniProtKB-UniRule"/>
</dbReference>
<dbReference type="CDD" id="cd01667">
    <property type="entry name" value="TGS_ThrRS"/>
    <property type="match status" value="1"/>
</dbReference>
<dbReference type="CDD" id="cd00860">
    <property type="entry name" value="ThrRS_anticodon"/>
    <property type="match status" value="1"/>
</dbReference>
<dbReference type="CDD" id="cd00771">
    <property type="entry name" value="ThrRS_core"/>
    <property type="match status" value="1"/>
</dbReference>
<dbReference type="FunFam" id="3.10.20.30:FF:000005">
    <property type="entry name" value="Threonine--tRNA ligase"/>
    <property type="match status" value="1"/>
</dbReference>
<dbReference type="FunFam" id="3.30.54.20:FF:000002">
    <property type="entry name" value="Threonine--tRNA ligase"/>
    <property type="match status" value="1"/>
</dbReference>
<dbReference type="FunFam" id="3.30.930.10:FF:000002">
    <property type="entry name" value="Threonine--tRNA ligase"/>
    <property type="match status" value="1"/>
</dbReference>
<dbReference type="FunFam" id="3.40.50.800:FF:000001">
    <property type="entry name" value="Threonine--tRNA ligase"/>
    <property type="match status" value="1"/>
</dbReference>
<dbReference type="FunFam" id="3.30.980.10:FF:000005">
    <property type="entry name" value="Threonyl-tRNA synthetase, mitochondrial"/>
    <property type="match status" value="1"/>
</dbReference>
<dbReference type="Gene3D" id="3.10.20.30">
    <property type="match status" value="1"/>
</dbReference>
<dbReference type="Gene3D" id="3.30.54.20">
    <property type="match status" value="1"/>
</dbReference>
<dbReference type="Gene3D" id="3.40.50.800">
    <property type="entry name" value="Anticodon-binding domain"/>
    <property type="match status" value="1"/>
</dbReference>
<dbReference type="Gene3D" id="3.30.930.10">
    <property type="entry name" value="Bira Bifunctional Protein, Domain 2"/>
    <property type="match status" value="1"/>
</dbReference>
<dbReference type="Gene3D" id="3.30.980.10">
    <property type="entry name" value="Threonyl-trna Synthetase, Chain A, domain 2"/>
    <property type="match status" value="1"/>
</dbReference>
<dbReference type="HAMAP" id="MF_00184">
    <property type="entry name" value="Thr_tRNA_synth"/>
    <property type="match status" value="1"/>
</dbReference>
<dbReference type="InterPro" id="IPR002314">
    <property type="entry name" value="aa-tRNA-synt_IIb"/>
</dbReference>
<dbReference type="InterPro" id="IPR006195">
    <property type="entry name" value="aa-tRNA-synth_II"/>
</dbReference>
<dbReference type="InterPro" id="IPR045864">
    <property type="entry name" value="aa-tRNA-synth_II/BPL/LPL"/>
</dbReference>
<dbReference type="InterPro" id="IPR004154">
    <property type="entry name" value="Anticodon-bd"/>
</dbReference>
<dbReference type="InterPro" id="IPR036621">
    <property type="entry name" value="Anticodon-bd_dom_sf"/>
</dbReference>
<dbReference type="InterPro" id="IPR012675">
    <property type="entry name" value="Beta-grasp_dom_sf"/>
</dbReference>
<dbReference type="InterPro" id="IPR004095">
    <property type="entry name" value="TGS"/>
</dbReference>
<dbReference type="InterPro" id="IPR012676">
    <property type="entry name" value="TGS-like"/>
</dbReference>
<dbReference type="InterPro" id="IPR002320">
    <property type="entry name" value="Thr-tRNA-ligase_IIa"/>
</dbReference>
<dbReference type="InterPro" id="IPR018163">
    <property type="entry name" value="Thr/Ala-tRNA-synth_IIc_edit"/>
</dbReference>
<dbReference type="InterPro" id="IPR047246">
    <property type="entry name" value="ThrRS_anticodon"/>
</dbReference>
<dbReference type="InterPro" id="IPR033728">
    <property type="entry name" value="ThrRS_core"/>
</dbReference>
<dbReference type="InterPro" id="IPR012947">
    <property type="entry name" value="tRNA_SAD"/>
</dbReference>
<dbReference type="NCBIfam" id="TIGR00418">
    <property type="entry name" value="thrS"/>
    <property type="match status" value="1"/>
</dbReference>
<dbReference type="PANTHER" id="PTHR11451:SF44">
    <property type="entry name" value="THREONINE--TRNA LIGASE, CHLOROPLASTIC_MITOCHONDRIAL 2"/>
    <property type="match status" value="1"/>
</dbReference>
<dbReference type="PANTHER" id="PTHR11451">
    <property type="entry name" value="THREONINE-TRNA LIGASE"/>
    <property type="match status" value="1"/>
</dbReference>
<dbReference type="Pfam" id="PF03129">
    <property type="entry name" value="HGTP_anticodon"/>
    <property type="match status" value="1"/>
</dbReference>
<dbReference type="Pfam" id="PF02824">
    <property type="entry name" value="TGS"/>
    <property type="match status" value="1"/>
</dbReference>
<dbReference type="Pfam" id="PF00587">
    <property type="entry name" value="tRNA-synt_2b"/>
    <property type="match status" value="1"/>
</dbReference>
<dbReference type="Pfam" id="PF07973">
    <property type="entry name" value="tRNA_SAD"/>
    <property type="match status" value="1"/>
</dbReference>
<dbReference type="PRINTS" id="PR01047">
    <property type="entry name" value="TRNASYNTHTHR"/>
</dbReference>
<dbReference type="SMART" id="SM00863">
    <property type="entry name" value="tRNA_SAD"/>
    <property type="match status" value="1"/>
</dbReference>
<dbReference type="SUPFAM" id="SSF52954">
    <property type="entry name" value="Class II aaRS ABD-related"/>
    <property type="match status" value="1"/>
</dbReference>
<dbReference type="SUPFAM" id="SSF55681">
    <property type="entry name" value="Class II aaRS and biotin synthetases"/>
    <property type="match status" value="1"/>
</dbReference>
<dbReference type="SUPFAM" id="SSF81271">
    <property type="entry name" value="TGS-like"/>
    <property type="match status" value="1"/>
</dbReference>
<dbReference type="SUPFAM" id="SSF55186">
    <property type="entry name" value="ThrRS/AlaRS common domain"/>
    <property type="match status" value="1"/>
</dbReference>
<dbReference type="PROSITE" id="PS50862">
    <property type="entry name" value="AA_TRNA_LIGASE_II"/>
    <property type="match status" value="1"/>
</dbReference>
<dbReference type="PROSITE" id="PS51880">
    <property type="entry name" value="TGS"/>
    <property type="match status" value="1"/>
</dbReference>
<accession>Q57PV3</accession>
<feature type="chain" id="PRO_0000101040" description="Threonine--tRNA ligase">
    <location>
        <begin position="1"/>
        <end position="642"/>
    </location>
</feature>
<feature type="domain" description="TGS" evidence="2">
    <location>
        <begin position="1"/>
        <end position="61"/>
    </location>
</feature>
<feature type="region of interest" description="Catalytic" evidence="1">
    <location>
        <begin position="243"/>
        <end position="534"/>
    </location>
</feature>
<feature type="binding site" evidence="1">
    <location>
        <position position="334"/>
    </location>
    <ligand>
        <name>Zn(2+)</name>
        <dbReference type="ChEBI" id="CHEBI:29105"/>
    </ligand>
</feature>
<feature type="binding site" evidence="1">
    <location>
        <position position="385"/>
    </location>
    <ligand>
        <name>Zn(2+)</name>
        <dbReference type="ChEBI" id="CHEBI:29105"/>
    </ligand>
</feature>
<feature type="binding site" evidence="1">
    <location>
        <position position="511"/>
    </location>
    <ligand>
        <name>Zn(2+)</name>
        <dbReference type="ChEBI" id="CHEBI:29105"/>
    </ligand>
</feature>
<organism>
    <name type="scientific">Salmonella choleraesuis (strain SC-B67)</name>
    <dbReference type="NCBI Taxonomy" id="321314"/>
    <lineage>
        <taxon>Bacteria</taxon>
        <taxon>Pseudomonadati</taxon>
        <taxon>Pseudomonadota</taxon>
        <taxon>Gammaproteobacteria</taxon>
        <taxon>Enterobacterales</taxon>
        <taxon>Enterobacteriaceae</taxon>
        <taxon>Salmonella</taxon>
    </lineage>
</organism>
<comment type="function">
    <text evidence="1">Catalyzes the attachment of threonine to tRNA(Thr) in a two-step reaction: L-threonine is first activated by ATP to form Thr-AMP and then transferred to the acceptor end of tRNA(Thr). Also edits incorrectly charged L-seryl-tRNA(Thr).</text>
</comment>
<comment type="catalytic activity">
    <reaction evidence="1">
        <text>tRNA(Thr) + L-threonine + ATP = L-threonyl-tRNA(Thr) + AMP + diphosphate + H(+)</text>
        <dbReference type="Rhea" id="RHEA:24624"/>
        <dbReference type="Rhea" id="RHEA-COMP:9670"/>
        <dbReference type="Rhea" id="RHEA-COMP:9704"/>
        <dbReference type="ChEBI" id="CHEBI:15378"/>
        <dbReference type="ChEBI" id="CHEBI:30616"/>
        <dbReference type="ChEBI" id="CHEBI:33019"/>
        <dbReference type="ChEBI" id="CHEBI:57926"/>
        <dbReference type="ChEBI" id="CHEBI:78442"/>
        <dbReference type="ChEBI" id="CHEBI:78534"/>
        <dbReference type="ChEBI" id="CHEBI:456215"/>
        <dbReference type="EC" id="6.1.1.3"/>
    </reaction>
</comment>
<comment type="cofactor">
    <cofactor evidence="1">
        <name>Zn(2+)</name>
        <dbReference type="ChEBI" id="CHEBI:29105"/>
    </cofactor>
    <text evidence="1">Binds 1 zinc ion per subunit.</text>
</comment>
<comment type="subunit">
    <text evidence="1">Homodimer.</text>
</comment>
<comment type="subcellular location">
    <subcellularLocation>
        <location evidence="1">Cytoplasm</location>
    </subcellularLocation>
</comment>
<comment type="similarity">
    <text evidence="1">Belongs to the class-II aminoacyl-tRNA synthetase family.</text>
</comment>
<sequence length="642" mass="73978">MPVITLPDGSQRHYDHPVSPMDVALDIGPGLAKATIAGRVNGELVDACDLIENDATLAIITAKDEEGLEIIRHSCAHLLGHAIKQLWPHTKMAIGPVVDNGFYYDVDLDRTLTQEDVEALEKRMHELAEKNYDVIKKKVSWHDARETFVKRGETYKVAILDENIAHDDKPGLYHHEEYVDMCRGPHVPNMRFCHHFKLMKTAGAYWRGDSNNKMLQRIYGTAWADKKALNAYLQRLEEAAKRDHRKIGKQLDLYHMQEEAPGMVFWHNDGWTIFRELEVFVRSKLKEYQYQEVKGPFMMDRVLWEKTGHWDNYKDAMFTTSSENREYCIKPMNCPGHVQIFNQGLKSYRDLPLRMAEFGSCHRNEPSGALHGLMRVRGFTQDDAHIFCTEEQIRDEVNACIRMVYDMYSTFGFEKIVVKLSTRPDKRIGSDEMWDRAEADLAVALEENNIPFEYQLGEGAFYGPKIEFTLYDCLDRAWQCGTVQLDFSLPSRLSASYVGEDNERKVPVMIHRAILGSMERFIGILTEEFAGFFPTWLAPVQVVVMNITDSQSEYVNELTQKLQNAGIRVKADLRNEKIGFKIREHTLRRVPYMLVCGDKEVEAGKVAVRTRRGKDLGSLDVNDVIEKLQQEIRSRSLQQLEE</sequence>
<protein>
    <recommendedName>
        <fullName evidence="1">Threonine--tRNA ligase</fullName>
        <ecNumber evidence="1">6.1.1.3</ecNumber>
    </recommendedName>
    <alternativeName>
        <fullName evidence="1">Threonyl-tRNA synthetase</fullName>
        <shortName evidence="1">ThrRS</shortName>
    </alternativeName>
</protein>